<name>RL33_RICB8</name>
<reference key="1">
    <citation type="submission" date="2007-09" db="EMBL/GenBank/DDBJ databases">
        <title>Complete genome sequencing of Rickettsia bellii.</title>
        <authorList>
            <person name="Madan A."/>
            <person name="Lee H."/>
            <person name="Madan A."/>
            <person name="Yoon J.-G."/>
            <person name="Ryu G.-Y."/>
            <person name="Dasch G."/>
            <person name="Ereemeva M."/>
        </authorList>
    </citation>
    <scope>NUCLEOTIDE SEQUENCE [LARGE SCALE GENOMIC DNA]</scope>
    <source>
        <strain>OSU 85-389</strain>
    </source>
</reference>
<organism>
    <name type="scientific">Rickettsia bellii (strain OSU 85-389)</name>
    <dbReference type="NCBI Taxonomy" id="391896"/>
    <lineage>
        <taxon>Bacteria</taxon>
        <taxon>Pseudomonadati</taxon>
        <taxon>Pseudomonadota</taxon>
        <taxon>Alphaproteobacteria</taxon>
        <taxon>Rickettsiales</taxon>
        <taxon>Rickettsiaceae</taxon>
        <taxon>Rickettsieae</taxon>
        <taxon>Rickettsia</taxon>
        <taxon>belli group</taxon>
    </lineage>
</organism>
<feature type="chain" id="PRO_1000004186" description="Large ribosomal subunit protein bL33">
    <location>
        <begin position="1"/>
        <end position="56"/>
    </location>
</feature>
<dbReference type="EMBL" id="CP000849">
    <property type="protein sequence ID" value="ABV79830.1"/>
    <property type="molecule type" value="Genomic_DNA"/>
</dbReference>
<dbReference type="RefSeq" id="WP_011478029.1">
    <property type="nucleotide sequence ID" value="NC_009883.1"/>
</dbReference>
<dbReference type="SMR" id="A8GY80"/>
<dbReference type="KEGG" id="rbo:A1I_07660"/>
<dbReference type="HOGENOM" id="CLU_190949_1_0_5"/>
<dbReference type="GO" id="GO:0005737">
    <property type="term" value="C:cytoplasm"/>
    <property type="evidence" value="ECO:0007669"/>
    <property type="project" value="UniProtKB-ARBA"/>
</dbReference>
<dbReference type="GO" id="GO:0015934">
    <property type="term" value="C:large ribosomal subunit"/>
    <property type="evidence" value="ECO:0007669"/>
    <property type="project" value="TreeGrafter"/>
</dbReference>
<dbReference type="GO" id="GO:0003735">
    <property type="term" value="F:structural constituent of ribosome"/>
    <property type="evidence" value="ECO:0007669"/>
    <property type="project" value="InterPro"/>
</dbReference>
<dbReference type="GO" id="GO:0006412">
    <property type="term" value="P:translation"/>
    <property type="evidence" value="ECO:0007669"/>
    <property type="project" value="UniProtKB-UniRule"/>
</dbReference>
<dbReference type="FunFam" id="2.20.28.120:FF:000006">
    <property type="entry name" value="50S ribosomal protein L33"/>
    <property type="match status" value="1"/>
</dbReference>
<dbReference type="Gene3D" id="2.20.28.120">
    <property type="entry name" value="Ribosomal protein L33"/>
    <property type="match status" value="1"/>
</dbReference>
<dbReference type="HAMAP" id="MF_00294">
    <property type="entry name" value="Ribosomal_bL33"/>
    <property type="match status" value="1"/>
</dbReference>
<dbReference type="InterPro" id="IPR001705">
    <property type="entry name" value="Ribosomal_bL33"/>
</dbReference>
<dbReference type="InterPro" id="IPR038584">
    <property type="entry name" value="Ribosomal_bL33_sf"/>
</dbReference>
<dbReference type="InterPro" id="IPR011332">
    <property type="entry name" value="Ribosomal_zn-bd"/>
</dbReference>
<dbReference type="NCBIfam" id="NF001860">
    <property type="entry name" value="PRK00595.1"/>
    <property type="match status" value="1"/>
</dbReference>
<dbReference type="NCBIfam" id="TIGR01023">
    <property type="entry name" value="rpmG_bact"/>
    <property type="match status" value="1"/>
</dbReference>
<dbReference type="PANTHER" id="PTHR15238">
    <property type="entry name" value="54S RIBOSOMAL PROTEIN L39, MITOCHONDRIAL"/>
    <property type="match status" value="1"/>
</dbReference>
<dbReference type="PANTHER" id="PTHR15238:SF1">
    <property type="entry name" value="LARGE RIBOSOMAL SUBUNIT PROTEIN BL33M"/>
    <property type="match status" value="1"/>
</dbReference>
<dbReference type="Pfam" id="PF00471">
    <property type="entry name" value="Ribosomal_L33"/>
    <property type="match status" value="1"/>
</dbReference>
<dbReference type="SUPFAM" id="SSF57829">
    <property type="entry name" value="Zn-binding ribosomal proteins"/>
    <property type="match status" value="1"/>
</dbReference>
<proteinExistence type="inferred from homology"/>
<protein>
    <recommendedName>
        <fullName evidence="1">Large ribosomal subunit protein bL33</fullName>
    </recommendedName>
    <alternativeName>
        <fullName evidence="2">50S ribosomal protein L33</fullName>
    </alternativeName>
</protein>
<comment type="similarity">
    <text evidence="1">Belongs to the bacterial ribosomal protein bL33 family.</text>
</comment>
<evidence type="ECO:0000255" key="1">
    <source>
        <dbReference type="HAMAP-Rule" id="MF_00294"/>
    </source>
</evidence>
<evidence type="ECO:0000305" key="2"/>
<sequence>MAKKNKNILVRLVSTAGTGFFLVKKRNPKTQTEKLSFRKYDPKVRKHVLFKEEKIK</sequence>
<gene>
    <name evidence="1" type="primary">rpmG</name>
    <name type="ordered locus">A1I_07660</name>
</gene>
<keyword id="KW-0687">Ribonucleoprotein</keyword>
<keyword id="KW-0689">Ribosomal protein</keyword>
<accession>A8GY80</accession>